<gene>
    <name type="ordered locus">NGO_1987</name>
</gene>
<evidence type="ECO:0000255" key="1">
    <source>
        <dbReference type="HAMAP-Rule" id="MF_00048"/>
    </source>
</evidence>
<keyword id="KW-1185">Reference proteome</keyword>
<reference key="1">
    <citation type="submission" date="2003-03" db="EMBL/GenBank/DDBJ databases">
        <title>The complete genome sequence of Neisseria gonorrhoeae.</title>
        <authorList>
            <person name="Lewis L.A."/>
            <person name="Gillaspy A.F."/>
            <person name="McLaughlin R.E."/>
            <person name="Gipson M."/>
            <person name="Ducey T.F."/>
            <person name="Ownbey T."/>
            <person name="Hartman K."/>
            <person name="Nydick C."/>
            <person name="Carson M.B."/>
            <person name="Vaughn J."/>
            <person name="Thomson C."/>
            <person name="Song L."/>
            <person name="Lin S."/>
            <person name="Yuan X."/>
            <person name="Najar F."/>
            <person name="Zhan M."/>
            <person name="Ren Q."/>
            <person name="Zhu H."/>
            <person name="Qi S."/>
            <person name="Kenton S.M."/>
            <person name="Lai H."/>
            <person name="White J.D."/>
            <person name="Clifton S."/>
            <person name="Roe B.A."/>
            <person name="Dyer D.W."/>
        </authorList>
    </citation>
    <scope>NUCLEOTIDE SEQUENCE [LARGE SCALE GENOMIC DNA]</scope>
    <source>
        <strain>ATCC 700825 / FA 1090</strain>
    </source>
</reference>
<dbReference type="EMBL" id="AE004969">
    <property type="protein sequence ID" value="AAW90595.1"/>
    <property type="molecule type" value="Genomic_DNA"/>
</dbReference>
<dbReference type="RefSeq" id="WP_003686873.1">
    <property type="nucleotide sequence ID" value="NC_002946.2"/>
</dbReference>
<dbReference type="RefSeq" id="YP_209007.1">
    <property type="nucleotide sequence ID" value="NC_002946.2"/>
</dbReference>
<dbReference type="SMR" id="Q5F5E2"/>
<dbReference type="STRING" id="242231.NGO_1987"/>
<dbReference type="DNASU" id="3282637"/>
<dbReference type="KEGG" id="ngo:NGO_1987"/>
<dbReference type="PATRIC" id="fig|242231.10.peg.2397"/>
<dbReference type="HOGENOM" id="CLU_115353_1_1_4"/>
<dbReference type="Proteomes" id="UP000000535">
    <property type="component" value="Chromosome"/>
</dbReference>
<dbReference type="GO" id="GO:0003676">
    <property type="term" value="F:nucleic acid binding"/>
    <property type="evidence" value="ECO:0007669"/>
    <property type="project" value="InterPro"/>
</dbReference>
<dbReference type="Gene3D" id="3.40.1350.10">
    <property type="match status" value="1"/>
</dbReference>
<dbReference type="HAMAP" id="MF_00048">
    <property type="entry name" value="UPF0102"/>
    <property type="match status" value="1"/>
</dbReference>
<dbReference type="InterPro" id="IPR011335">
    <property type="entry name" value="Restrct_endonuc-II-like"/>
</dbReference>
<dbReference type="InterPro" id="IPR011856">
    <property type="entry name" value="tRNA_endonuc-like_dom_sf"/>
</dbReference>
<dbReference type="InterPro" id="IPR003509">
    <property type="entry name" value="UPF0102_YraN-like"/>
</dbReference>
<dbReference type="NCBIfam" id="NF009150">
    <property type="entry name" value="PRK12497.1-3"/>
    <property type="match status" value="1"/>
</dbReference>
<dbReference type="NCBIfam" id="TIGR00252">
    <property type="entry name" value="YraN family protein"/>
    <property type="match status" value="1"/>
</dbReference>
<dbReference type="PANTHER" id="PTHR34039">
    <property type="entry name" value="UPF0102 PROTEIN YRAN"/>
    <property type="match status" value="1"/>
</dbReference>
<dbReference type="PANTHER" id="PTHR34039:SF1">
    <property type="entry name" value="UPF0102 PROTEIN YRAN"/>
    <property type="match status" value="1"/>
</dbReference>
<dbReference type="Pfam" id="PF02021">
    <property type="entry name" value="UPF0102"/>
    <property type="match status" value="1"/>
</dbReference>
<dbReference type="SUPFAM" id="SSF52980">
    <property type="entry name" value="Restriction endonuclease-like"/>
    <property type="match status" value="1"/>
</dbReference>
<proteinExistence type="inferred from homology"/>
<name>Y1987_NEIG1</name>
<accession>Q5F5E2</accession>
<comment type="similarity">
    <text evidence="1">Belongs to the UPF0102 family.</text>
</comment>
<protein>
    <recommendedName>
        <fullName evidence="1">UPF0102 protein NGO_1987</fullName>
    </recommendedName>
</protein>
<feature type="chain" id="PRO_1000009236" description="UPF0102 protein NGO_1987">
    <location>
        <begin position="1"/>
        <end position="115"/>
    </location>
</feature>
<organism>
    <name type="scientific">Neisseria gonorrhoeae (strain ATCC 700825 / FA 1090)</name>
    <dbReference type="NCBI Taxonomy" id="242231"/>
    <lineage>
        <taxon>Bacteria</taxon>
        <taxon>Pseudomonadati</taxon>
        <taxon>Pseudomonadota</taxon>
        <taxon>Betaproteobacteria</taxon>
        <taxon>Neisseriales</taxon>
        <taxon>Neisseriaceae</taxon>
        <taxon>Neisseria</taxon>
    </lineage>
</organism>
<sequence>MRLNHKQGTAGEDAALAFLQSQGCTLLARNWHCAYGEIDLIVKNGGMILFVEVKYRKNQRFGGAAYSISPSKLLKLQRSVEYYLQQNRLTNVPCRLDAVLIEGNRPPEWIKNITG</sequence>